<sequence length="364" mass="38996">MSHNTFGHLFRVTTWGESHGAALGCVIDGCPPGIAFTLTEIQAYLNKRRPGHSEYTTQRRELDQVEILSGVVSQNDGKALVTTGTPISMFIRNVDHHSEDYNAIMHKYRPGHADYTYDVKYGIRDHRGGGRASARETVVRVAAGALARKIVPGLIVRGAVTAIGPHNIDRDRWDWSEVDKNPFFSPDAQAACVFANYISQLCKTGSSVGAIVEIVAENVPAGLGAPVYAKLDQDIASFLMSINAVKGIEIGDGFAAAHLTGEENADEMRMGSDGKPVFLSNHAGGILGGISNGQPIVARFAVKPTSSILTPSRSIDIEGNDVNVMTKGRHDPCVGIRAVPVGEAMVACAIADHYLRHRGQVGCI</sequence>
<accession>A1URW3</accession>
<name>AROC_BARBK</name>
<evidence type="ECO:0000255" key="1">
    <source>
        <dbReference type="HAMAP-Rule" id="MF_00300"/>
    </source>
</evidence>
<keyword id="KW-0028">Amino-acid biosynthesis</keyword>
<keyword id="KW-0057">Aromatic amino acid biosynthesis</keyword>
<keyword id="KW-0274">FAD</keyword>
<keyword id="KW-0285">Flavoprotein</keyword>
<keyword id="KW-0288">FMN</keyword>
<keyword id="KW-0456">Lyase</keyword>
<keyword id="KW-0521">NADP</keyword>
<feature type="chain" id="PRO_1000022461" description="Chorismate synthase">
    <location>
        <begin position="1"/>
        <end position="364"/>
    </location>
</feature>
<feature type="binding site" evidence="1">
    <location>
        <position position="48"/>
    </location>
    <ligand>
        <name>NADP(+)</name>
        <dbReference type="ChEBI" id="CHEBI:58349"/>
    </ligand>
</feature>
<feature type="binding site" evidence="1">
    <location>
        <begin position="131"/>
        <end position="133"/>
    </location>
    <ligand>
        <name>FMN</name>
        <dbReference type="ChEBI" id="CHEBI:58210"/>
    </ligand>
</feature>
<feature type="binding site" evidence="1">
    <location>
        <begin position="243"/>
        <end position="244"/>
    </location>
    <ligand>
        <name>FMN</name>
        <dbReference type="ChEBI" id="CHEBI:58210"/>
    </ligand>
</feature>
<feature type="binding site" evidence="1">
    <location>
        <position position="288"/>
    </location>
    <ligand>
        <name>FMN</name>
        <dbReference type="ChEBI" id="CHEBI:58210"/>
    </ligand>
</feature>
<feature type="binding site" evidence="1">
    <location>
        <begin position="303"/>
        <end position="307"/>
    </location>
    <ligand>
        <name>FMN</name>
        <dbReference type="ChEBI" id="CHEBI:58210"/>
    </ligand>
</feature>
<feature type="binding site" evidence="1">
    <location>
        <position position="329"/>
    </location>
    <ligand>
        <name>FMN</name>
        <dbReference type="ChEBI" id="CHEBI:58210"/>
    </ligand>
</feature>
<protein>
    <recommendedName>
        <fullName evidence="1">Chorismate synthase</fullName>
        <shortName evidence="1">CS</shortName>
        <ecNumber evidence="1">4.2.3.5</ecNumber>
    </recommendedName>
    <alternativeName>
        <fullName evidence="1">5-enolpyruvylshikimate-3-phosphate phospholyase</fullName>
    </alternativeName>
</protein>
<gene>
    <name evidence="1" type="primary">aroC</name>
    <name type="ordered locus">BARBAKC583_0397</name>
</gene>
<reference key="1">
    <citation type="submission" date="2006-12" db="EMBL/GenBank/DDBJ databases">
        <authorList>
            <person name="Hendrix L."/>
            <person name="Mohamoud Y."/>
            <person name="Radune D."/>
            <person name="Shvartsbeyn A."/>
            <person name="Daugherty S."/>
            <person name="Dodson R."/>
            <person name="Durkin A.S."/>
            <person name="Harkins D."/>
            <person name="Huot H."/>
            <person name="Kothari S.P."/>
            <person name="Madupu R."/>
            <person name="Li J."/>
            <person name="Nelson W.C."/>
            <person name="Shrivastava S."/>
            <person name="Giglio M.G."/>
            <person name="Haft D."/>
            <person name="Selengut J."/>
            <person name="Fraser-Ligget C."/>
            <person name="Seshadri R."/>
        </authorList>
    </citation>
    <scope>NUCLEOTIDE SEQUENCE [LARGE SCALE GENOMIC DNA]</scope>
    <source>
        <strain>ATCC 35685 / KC583 / Herrer 020/F12,63</strain>
    </source>
</reference>
<organism>
    <name type="scientific">Bartonella bacilliformis (strain ATCC 35685 / KC583 / Herrer 020/F12,63)</name>
    <dbReference type="NCBI Taxonomy" id="360095"/>
    <lineage>
        <taxon>Bacteria</taxon>
        <taxon>Pseudomonadati</taxon>
        <taxon>Pseudomonadota</taxon>
        <taxon>Alphaproteobacteria</taxon>
        <taxon>Hyphomicrobiales</taxon>
        <taxon>Bartonellaceae</taxon>
        <taxon>Bartonella</taxon>
    </lineage>
</organism>
<comment type="function">
    <text evidence="1">Catalyzes the anti-1,4-elimination of the C-3 phosphate and the C-6 proR hydrogen from 5-enolpyruvylshikimate-3-phosphate (EPSP) to yield chorismate, which is the branch point compound that serves as the starting substrate for the three terminal pathways of aromatic amino acid biosynthesis. This reaction introduces a second double bond into the aromatic ring system.</text>
</comment>
<comment type="catalytic activity">
    <reaction evidence="1">
        <text>5-O-(1-carboxyvinyl)-3-phosphoshikimate = chorismate + phosphate</text>
        <dbReference type="Rhea" id="RHEA:21020"/>
        <dbReference type="ChEBI" id="CHEBI:29748"/>
        <dbReference type="ChEBI" id="CHEBI:43474"/>
        <dbReference type="ChEBI" id="CHEBI:57701"/>
        <dbReference type="EC" id="4.2.3.5"/>
    </reaction>
</comment>
<comment type="cofactor">
    <cofactor evidence="1">
        <name>FMNH2</name>
        <dbReference type="ChEBI" id="CHEBI:57618"/>
    </cofactor>
    <text evidence="1">Reduced FMN (FMNH(2)).</text>
</comment>
<comment type="pathway">
    <text evidence="1">Metabolic intermediate biosynthesis; chorismate biosynthesis; chorismate from D-erythrose 4-phosphate and phosphoenolpyruvate: step 7/7.</text>
</comment>
<comment type="subunit">
    <text evidence="1">Homotetramer.</text>
</comment>
<comment type="similarity">
    <text evidence="1">Belongs to the chorismate synthase family.</text>
</comment>
<proteinExistence type="inferred from homology"/>
<dbReference type="EC" id="4.2.3.5" evidence="1"/>
<dbReference type="EMBL" id="CP000524">
    <property type="protein sequence ID" value="ABM44553.1"/>
    <property type="molecule type" value="Genomic_DNA"/>
</dbReference>
<dbReference type="RefSeq" id="WP_005766405.1">
    <property type="nucleotide sequence ID" value="NC_008783.1"/>
</dbReference>
<dbReference type="SMR" id="A1URW3"/>
<dbReference type="STRING" id="360095.BARBAKC583_0397"/>
<dbReference type="GeneID" id="4684119"/>
<dbReference type="KEGG" id="bbk:BARBAKC583_0397"/>
<dbReference type="PATRIC" id="fig|360095.6.peg.380"/>
<dbReference type="eggNOG" id="COG0082">
    <property type="taxonomic scope" value="Bacteria"/>
</dbReference>
<dbReference type="HOGENOM" id="CLU_034547_0_0_5"/>
<dbReference type="OrthoDB" id="9771806at2"/>
<dbReference type="UniPathway" id="UPA00053">
    <property type="reaction ID" value="UER00090"/>
</dbReference>
<dbReference type="Proteomes" id="UP000000643">
    <property type="component" value="Chromosome"/>
</dbReference>
<dbReference type="GO" id="GO:0005829">
    <property type="term" value="C:cytosol"/>
    <property type="evidence" value="ECO:0007669"/>
    <property type="project" value="TreeGrafter"/>
</dbReference>
<dbReference type="GO" id="GO:0004107">
    <property type="term" value="F:chorismate synthase activity"/>
    <property type="evidence" value="ECO:0007669"/>
    <property type="project" value="UniProtKB-UniRule"/>
</dbReference>
<dbReference type="GO" id="GO:0010181">
    <property type="term" value="F:FMN binding"/>
    <property type="evidence" value="ECO:0007669"/>
    <property type="project" value="TreeGrafter"/>
</dbReference>
<dbReference type="GO" id="GO:0008652">
    <property type="term" value="P:amino acid biosynthetic process"/>
    <property type="evidence" value="ECO:0007669"/>
    <property type="project" value="UniProtKB-KW"/>
</dbReference>
<dbReference type="GO" id="GO:0009073">
    <property type="term" value="P:aromatic amino acid family biosynthetic process"/>
    <property type="evidence" value="ECO:0007669"/>
    <property type="project" value="UniProtKB-KW"/>
</dbReference>
<dbReference type="GO" id="GO:0009423">
    <property type="term" value="P:chorismate biosynthetic process"/>
    <property type="evidence" value="ECO:0007669"/>
    <property type="project" value="UniProtKB-UniRule"/>
</dbReference>
<dbReference type="CDD" id="cd07304">
    <property type="entry name" value="Chorismate_synthase"/>
    <property type="match status" value="1"/>
</dbReference>
<dbReference type="Gene3D" id="3.60.150.10">
    <property type="entry name" value="Chorismate synthase AroC"/>
    <property type="match status" value="1"/>
</dbReference>
<dbReference type="HAMAP" id="MF_00300">
    <property type="entry name" value="Chorismate_synth"/>
    <property type="match status" value="1"/>
</dbReference>
<dbReference type="InterPro" id="IPR000453">
    <property type="entry name" value="Chorismate_synth"/>
</dbReference>
<dbReference type="InterPro" id="IPR035904">
    <property type="entry name" value="Chorismate_synth_AroC_sf"/>
</dbReference>
<dbReference type="InterPro" id="IPR020541">
    <property type="entry name" value="Chorismate_synthase_CS"/>
</dbReference>
<dbReference type="NCBIfam" id="TIGR00033">
    <property type="entry name" value="aroC"/>
    <property type="match status" value="1"/>
</dbReference>
<dbReference type="NCBIfam" id="NF003793">
    <property type="entry name" value="PRK05382.1"/>
    <property type="match status" value="1"/>
</dbReference>
<dbReference type="PANTHER" id="PTHR21085">
    <property type="entry name" value="CHORISMATE SYNTHASE"/>
    <property type="match status" value="1"/>
</dbReference>
<dbReference type="PANTHER" id="PTHR21085:SF0">
    <property type="entry name" value="CHORISMATE SYNTHASE"/>
    <property type="match status" value="1"/>
</dbReference>
<dbReference type="Pfam" id="PF01264">
    <property type="entry name" value="Chorismate_synt"/>
    <property type="match status" value="1"/>
</dbReference>
<dbReference type="PIRSF" id="PIRSF001456">
    <property type="entry name" value="Chorismate_synth"/>
    <property type="match status" value="1"/>
</dbReference>
<dbReference type="SUPFAM" id="SSF103263">
    <property type="entry name" value="Chorismate synthase, AroC"/>
    <property type="match status" value="1"/>
</dbReference>
<dbReference type="PROSITE" id="PS00787">
    <property type="entry name" value="CHORISMATE_SYNTHASE_1"/>
    <property type="match status" value="1"/>
</dbReference>
<dbReference type="PROSITE" id="PS00788">
    <property type="entry name" value="CHORISMATE_SYNTHASE_2"/>
    <property type="match status" value="1"/>
</dbReference>
<dbReference type="PROSITE" id="PS00789">
    <property type="entry name" value="CHORISMATE_SYNTHASE_3"/>
    <property type="match status" value="1"/>
</dbReference>